<feature type="chain" id="PRO_0000413782" description="Cell division protein ZapC">
    <location>
        <begin position="1"/>
        <end position="183"/>
    </location>
</feature>
<name>ZAPC_PROMH</name>
<reference key="1">
    <citation type="journal article" date="2008" name="J. Bacteriol.">
        <title>Complete genome sequence of uropathogenic Proteus mirabilis, a master of both adherence and motility.</title>
        <authorList>
            <person name="Pearson M.M."/>
            <person name="Sebaihia M."/>
            <person name="Churcher C."/>
            <person name="Quail M.A."/>
            <person name="Seshasayee A.S."/>
            <person name="Luscombe N.M."/>
            <person name="Abdellah Z."/>
            <person name="Arrosmith C."/>
            <person name="Atkin B."/>
            <person name="Chillingworth T."/>
            <person name="Hauser H."/>
            <person name="Jagels K."/>
            <person name="Moule S."/>
            <person name="Mungall K."/>
            <person name="Norbertczak H."/>
            <person name="Rabbinowitsch E."/>
            <person name="Walker D."/>
            <person name="Whithead S."/>
            <person name="Thomson N.R."/>
            <person name="Rather P.N."/>
            <person name="Parkhill J."/>
            <person name="Mobley H.L.T."/>
        </authorList>
    </citation>
    <scope>NUCLEOTIDE SEQUENCE [LARGE SCALE GENOMIC DNA]</scope>
    <source>
        <strain>HI4320</strain>
    </source>
</reference>
<accession>B4EVC4</accession>
<protein>
    <recommendedName>
        <fullName evidence="1">Cell division protein ZapC</fullName>
    </recommendedName>
</protein>
<sequence length="183" mass="21336">MIIKPDDRWRWYFDDEQQKLMLDLANGMIFRSRFPSKMLSATAHQSSPFTVDDAALYYGYDEQIRQIDMPSESRAELALNALIAHRFLKPLMPKSWYFEVSHSSTRPYLAQVVETALKDSNEKVLFLVAEVGEQACLCLLAQPQLALFDRTLTFCDPLKIMNDRLSEYHKQSEPRSFLYEKVI</sequence>
<organism>
    <name type="scientific">Proteus mirabilis (strain HI4320)</name>
    <dbReference type="NCBI Taxonomy" id="529507"/>
    <lineage>
        <taxon>Bacteria</taxon>
        <taxon>Pseudomonadati</taxon>
        <taxon>Pseudomonadota</taxon>
        <taxon>Gammaproteobacteria</taxon>
        <taxon>Enterobacterales</taxon>
        <taxon>Morganellaceae</taxon>
        <taxon>Proteus</taxon>
    </lineage>
</organism>
<gene>
    <name evidence="1" type="primary">zapC</name>
    <name type="ordered locus">PMI0772</name>
</gene>
<dbReference type="EMBL" id="AM942759">
    <property type="protein sequence ID" value="CAR41769.1"/>
    <property type="molecule type" value="Genomic_DNA"/>
</dbReference>
<dbReference type="RefSeq" id="WP_012367736.1">
    <property type="nucleotide sequence ID" value="NC_010554.1"/>
</dbReference>
<dbReference type="SMR" id="B4EVC4"/>
<dbReference type="EnsemblBacteria" id="CAR41769">
    <property type="protein sequence ID" value="CAR41769"/>
    <property type="gene ID" value="PMI0772"/>
</dbReference>
<dbReference type="GeneID" id="6800689"/>
<dbReference type="KEGG" id="pmr:PMI0772"/>
<dbReference type="eggNOG" id="ENOG502Z8AH">
    <property type="taxonomic scope" value="Bacteria"/>
</dbReference>
<dbReference type="HOGENOM" id="CLU_128248_0_0_6"/>
<dbReference type="Proteomes" id="UP000008319">
    <property type="component" value="Chromosome"/>
</dbReference>
<dbReference type="GO" id="GO:0005737">
    <property type="term" value="C:cytoplasm"/>
    <property type="evidence" value="ECO:0007669"/>
    <property type="project" value="UniProtKB-SubCell"/>
</dbReference>
<dbReference type="GO" id="GO:0000917">
    <property type="term" value="P:division septum assembly"/>
    <property type="evidence" value="ECO:0007669"/>
    <property type="project" value="UniProtKB-KW"/>
</dbReference>
<dbReference type="GO" id="GO:0043093">
    <property type="term" value="P:FtsZ-dependent cytokinesis"/>
    <property type="evidence" value="ECO:0007669"/>
    <property type="project" value="UniProtKB-UniRule"/>
</dbReference>
<dbReference type="HAMAP" id="MF_00906">
    <property type="entry name" value="ZapC"/>
    <property type="match status" value="1"/>
</dbReference>
<dbReference type="InterPro" id="IPR009809">
    <property type="entry name" value="ZapC"/>
</dbReference>
<dbReference type="InterPro" id="IPR048372">
    <property type="entry name" value="ZapC_C"/>
</dbReference>
<dbReference type="InterPro" id="IPR048373">
    <property type="entry name" value="ZapC_N"/>
</dbReference>
<dbReference type="Pfam" id="PF07126">
    <property type="entry name" value="ZapC_C"/>
    <property type="match status" value="1"/>
</dbReference>
<dbReference type="Pfam" id="PF21083">
    <property type="entry name" value="ZapC_N"/>
    <property type="match status" value="1"/>
</dbReference>
<dbReference type="PIRSF" id="PIRSF010252">
    <property type="entry name" value="ZapC"/>
    <property type="match status" value="1"/>
</dbReference>
<proteinExistence type="inferred from homology"/>
<evidence type="ECO:0000255" key="1">
    <source>
        <dbReference type="HAMAP-Rule" id="MF_00906"/>
    </source>
</evidence>
<comment type="function">
    <text evidence="1">Contributes to the efficiency of the cell division process by stabilizing the polymeric form of the cell division protein FtsZ. Acts by promoting interactions between FtsZ protofilaments and suppressing the GTPase activity of FtsZ.</text>
</comment>
<comment type="subunit">
    <text evidence="1">Interacts directly with FtsZ.</text>
</comment>
<comment type="subcellular location">
    <subcellularLocation>
        <location evidence="1">Cytoplasm</location>
    </subcellularLocation>
</comment>
<comment type="similarity">
    <text evidence="1">Belongs to the ZapC family.</text>
</comment>
<keyword id="KW-0131">Cell cycle</keyword>
<keyword id="KW-0132">Cell division</keyword>
<keyword id="KW-0963">Cytoplasm</keyword>
<keyword id="KW-1185">Reference proteome</keyword>
<keyword id="KW-0717">Septation</keyword>